<sequence>MRFKGLDLNLLVALDALITERNLSSAARKINLSQPAMSAAVARLRKHFRDELFGMRGRELVLSSRAEGLAAPVREALMHIELSIMARHPFDPARLNRRFRIVLSDFVTVVLFRNVVARVTREAPAVSFELAAPTDEHELLLRRGEVDFVIRPDFFMSSTHPRAALFEERLVCVGCCTNRELQPRLTFDRYMSMGHVAVKHGGAPRTPVEHSFLTDLGPTRRIDILVQSFSMIPPLIVGTNRIGTMPLGLVRHFQRTMPLRIVELPHPFPAFTEAVQWPSLHNSDPGSLWMRDILFQEATRMATTQELRVTSSPEDAEPPGHFVRSVSPLP</sequence>
<proteinExistence type="inferred from homology"/>
<feature type="chain" id="PRO_0000105705" description="Nodulation protein D 2">
    <location>
        <begin position="1"/>
        <end position="330"/>
    </location>
</feature>
<feature type="domain" description="HTH lysR-type" evidence="2">
    <location>
        <begin position="6"/>
        <end position="63"/>
    </location>
</feature>
<feature type="DNA-binding region" description="H-T-H motif" evidence="2">
    <location>
        <begin position="23"/>
        <end position="42"/>
    </location>
</feature>
<feature type="region of interest" description="Disordered" evidence="3">
    <location>
        <begin position="308"/>
        <end position="330"/>
    </location>
</feature>
<comment type="function">
    <text evidence="1">NodD regulates the expression of the nodABCFE genes which encode other nodulation proteins. NodD is also a negative regulator of its own expression. Binds flavonoids as inducers (By similarity).</text>
</comment>
<comment type="similarity">
    <text evidence="4">Belongs to the LysR transcriptional regulatory family.</text>
</comment>
<name>NODD2_BRADU</name>
<reference key="1">
    <citation type="journal article" date="1992" name="Mol. Plant Microbe Interact.">
        <title>Structural and functional analysis of two different nodD genes in Bradyrhizobium japonicum USDA110.</title>
        <authorList>
            <person name="Goettfert M."/>
            <person name="Holzhauser D."/>
            <person name="Bani D."/>
            <person name="Hennecke H."/>
        </authorList>
    </citation>
    <scope>NUCLEOTIDE SEQUENCE [GENOMIC DNA]</scope>
    <source>
        <strain>JCM 10833 / BCRC 13528 / IAM 13628 / NBRC 14792 / USDA 110</strain>
    </source>
</reference>
<reference key="2">
    <citation type="journal article" date="2001" name="J. Bacteriol.">
        <title>Potential symbiosis-specific genes uncovered by sequencing a 410-kb DNA region of the Bradyrhizobium japonicum chromosome.</title>
        <authorList>
            <person name="Goettfert M."/>
            <person name="Roethlisberger S."/>
            <person name="Kuendig C."/>
            <person name="Beck C."/>
            <person name="Marty R."/>
            <person name="Hennecke H."/>
        </authorList>
    </citation>
    <scope>NUCLEOTIDE SEQUENCE [GENOMIC DNA]</scope>
    <source>
        <strain>USDA 110spc4</strain>
    </source>
</reference>
<reference key="3">
    <citation type="journal article" date="2002" name="DNA Res.">
        <title>Complete genomic sequence of nitrogen-fixing symbiotic bacterium Bradyrhizobium japonicum USDA110.</title>
        <authorList>
            <person name="Kaneko T."/>
            <person name="Nakamura Y."/>
            <person name="Sato S."/>
            <person name="Minamisawa K."/>
            <person name="Uchiumi T."/>
            <person name="Sasamoto S."/>
            <person name="Watanabe A."/>
            <person name="Idesawa K."/>
            <person name="Iriguchi M."/>
            <person name="Kawashima K."/>
            <person name="Kohara M."/>
            <person name="Matsumoto M."/>
            <person name="Shimpo S."/>
            <person name="Tsuruoka H."/>
            <person name="Wada T."/>
            <person name="Yamada M."/>
            <person name="Tabata S."/>
        </authorList>
    </citation>
    <scope>NUCLEOTIDE SEQUENCE [LARGE SCALE GENOMIC DNA]</scope>
    <source>
        <strain>JCM 10833 / BCRC 13528 / IAM 13628 / NBRC 14792 / USDA 110</strain>
    </source>
</reference>
<evidence type="ECO:0000250" key="1"/>
<evidence type="ECO:0000255" key="2">
    <source>
        <dbReference type="PROSITE-ProRule" id="PRU00253"/>
    </source>
</evidence>
<evidence type="ECO:0000256" key="3">
    <source>
        <dbReference type="SAM" id="MobiDB-lite"/>
    </source>
</evidence>
<evidence type="ECO:0000305" key="4"/>
<dbReference type="EMBL" id="M81825">
    <property type="protein sequence ID" value="AAA26233.1"/>
    <property type="molecule type" value="Genomic_DNA"/>
</dbReference>
<dbReference type="EMBL" id="AH010242">
    <property type="protein sequence ID" value="AAG60992.1"/>
    <property type="molecule type" value="Genomic_DNA"/>
</dbReference>
<dbReference type="EMBL" id="BA000040">
    <property type="protein sequence ID" value="BAC47286.1"/>
    <property type="molecule type" value="Genomic_DNA"/>
</dbReference>
<dbReference type="RefSeq" id="NP_768661.1">
    <property type="nucleotide sequence ID" value="NC_004463.1"/>
</dbReference>
<dbReference type="RefSeq" id="WP_011084818.1">
    <property type="nucleotide sequence ID" value="NZ_CP011360.1"/>
</dbReference>
<dbReference type="SMR" id="Q45263"/>
<dbReference type="STRING" id="224911.AAV28_06940"/>
<dbReference type="EnsemblBacteria" id="BAC47286">
    <property type="protein sequence ID" value="BAC47286"/>
    <property type="gene ID" value="BAC47286"/>
</dbReference>
<dbReference type="GeneID" id="92969624"/>
<dbReference type="KEGG" id="bja:bll2021"/>
<dbReference type="PATRIC" id="fig|224911.44.peg.1523"/>
<dbReference type="eggNOG" id="COG0583">
    <property type="taxonomic scope" value="Bacteria"/>
</dbReference>
<dbReference type="HOGENOM" id="CLU_039613_39_0_5"/>
<dbReference type="InParanoid" id="Q45263"/>
<dbReference type="OrthoDB" id="8339333at2"/>
<dbReference type="PhylomeDB" id="Q45263"/>
<dbReference type="Proteomes" id="UP000002526">
    <property type="component" value="Chromosome"/>
</dbReference>
<dbReference type="GO" id="GO:0003677">
    <property type="term" value="F:DNA binding"/>
    <property type="evidence" value="ECO:0007669"/>
    <property type="project" value="UniProtKB-KW"/>
</dbReference>
<dbReference type="GO" id="GO:0003700">
    <property type="term" value="F:DNA-binding transcription factor activity"/>
    <property type="evidence" value="ECO:0007669"/>
    <property type="project" value="InterPro"/>
</dbReference>
<dbReference type="GO" id="GO:0006355">
    <property type="term" value="P:regulation of DNA-templated transcription"/>
    <property type="evidence" value="ECO:0000318"/>
    <property type="project" value="GO_Central"/>
</dbReference>
<dbReference type="Gene3D" id="3.40.190.10">
    <property type="entry name" value="Periplasmic binding protein-like II"/>
    <property type="match status" value="2"/>
</dbReference>
<dbReference type="Gene3D" id="1.10.10.10">
    <property type="entry name" value="Winged helix-like DNA-binding domain superfamily/Winged helix DNA-binding domain"/>
    <property type="match status" value="1"/>
</dbReference>
<dbReference type="InterPro" id="IPR050389">
    <property type="entry name" value="LysR-type_TF"/>
</dbReference>
<dbReference type="InterPro" id="IPR005119">
    <property type="entry name" value="LysR_subst-bd"/>
</dbReference>
<dbReference type="InterPro" id="IPR000847">
    <property type="entry name" value="Tscrpt_reg_HTH_LysR"/>
</dbReference>
<dbReference type="InterPro" id="IPR036388">
    <property type="entry name" value="WH-like_DNA-bd_sf"/>
</dbReference>
<dbReference type="InterPro" id="IPR036390">
    <property type="entry name" value="WH_DNA-bd_sf"/>
</dbReference>
<dbReference type="PANTHER" id="PTHR30118:SF6">
    <property type="entry name" value="HTH-TYPE TRANSCRIPTIONAL REGULATOR LEUO"/>
    <property type="match status" value="1"/>
</dbReference>
<dbReference type="PANTHER" id="PTHR30118">
    <property type="entry name" value="HTH-TYPE TRANSCRIPTIONAL REGULATOR LEUO-RELATED"/>
    <property type="match status" value="1"/>
</dbReference>
<dbReference type="Pfam" id="PF00126">
    <property type="entry name" value="HTH_1"/>
    <property type="match status" value="1"/>
</dbReference>
<dbReference type="Pfam" id="PF03466">
    <property type="entry name" value="LysR_substrate"/>
    <property type="match status" value="1"/>
</dbReference>
<dbReference type="PRINTS" id="PR00039">
    <property type="entry name" value="HTHLYSR"/>
</dbReference>
<dbReference type="SUPFAM" id="SSF53850">
    <property type="entry name" value="Periplasmic binding protein-like II"/>
    <property type="match status" value="1"/>
</dbReference>
<dbReference type="SUPFAM" id="SSF46785">
    <property type="entry name" value="Winged helix' DNA-binding domain"/>
    <property type="match status" value="1"/>
</dbReference>
<dbReference type="PROSITE" id="PS50931">
    <property type="entry name" value="HTH_LYSR"/>
    <property type="match status" value="1"/>
</dbReference>
<organism>
    <name type="scientific">Bradyrhizobium diazoefficiens (strain JCM 10833 / BCRC 13528 / IAM 13628 / NBRC 14792 / USDA 110)</name>
    <dbReference type="NCBI Taxonomy" id="224911"/>
    <lineage>
        <taxon>Bacteria</taxon>
        <taxon>Pseudomonadati</taxon>
        <taxon>Pseudomonadota</taxon>
        <taxon>Alphaproteobacteria</taxon>
        <taxon>Hyphomicrobiales</taxon>
        <taxon>Nitrobacteraceae</taxon>
        <taxon>Bradyrhizobium</taxon>
    </lineage>
</organism>
<protein>
    <recommendedName>
        <fullName>Nodulation protein D 2</fullName>
    </recommendedName>
</protein>
<gene>
    <name type="primary">nodD2</name>
    <name type="ordered locus">bll2021</name>
</gene>
<keyword id="KW-0010">Activator</keyword>
<keyword id="KW-0238">DNA-binding</keyword>
<keyword id="KW-0536">Nodulation</keyword>
<keyword id="KW-1185">Reference proteome</keyword>
<keyword id="KW-0678">Repressor</keyword>
<keyword id="KW-0804">Transcription</keyword>
<keyword id="KW-0805">Transcription regulation</keyword>
<accession>Q45263</accession>